<dbReference type="EMBL" id="AP008934">
    <property type="protein sequence ID" value="BAE18972.1"/>
    <property type="molecule type" value="Genomic_DNA"/>
</dbReference>
<dbReference type="RefSeq" id="WP_011303517.1">
    <property type="nucleotide sequence ID" value="NZ_MTGA01000039.1"/>
</dbReference>
<dbReference type="SMR" id="Q49W87"/>
<dbReference type="GeneID" id="3616482"/>
<dbReference type="KEGG" id="ssp:SSP1827"/>
<dbReference type="eggNOG" id="COG1863">
    <property type="taxonomic scope" value="Bacteria"/>
</dbReference>
<dbReference type="HOGENOM" id="CLU_086615_3_2_9"/>
<dbReference type="OrthoDB" id="9800498at2"/>
<dbReference type="Proteomes" id="UP000006371">
    <property type="component" value="Chromosome"/>
</dbReference>
<dbReference type="GO" id="GO:0005886">
    <property type="term" value="C:plasma membrane"/>
    <property type="evidence" value="ECO:0007669"/>
    <property type="project" value="UniProtKB-SubCell"/>
</dbReference>
<dbReference type="GO" id="GO:0015297">
    <property type="term" value="F:antiporter activity"/>
    <property type="evidence" value="ECO:0007669"/>
    <property type="project" value="UniProtKB-KW"/>
</dbReference>
<dbReference type="GO" id="GO:0008324">
    <property type="term" value="F:monoatomic cation transmembrane transporter activity"/>
    <property type="evidence" value="ECO:0007669"/>
    <property type="project" value="InterPro"/>
</dbReference>
<dbReference type="GO" id="GO:1902600">
    <property type="term" value="P:proton transmembrane transport"/>
    <property type="evidence" value="ECO:0007669"/>
    <property type="project" value="UniProtKB-KW"/>
</dbReference>
<dbReference type="GO" id="GO:0006814">
    <property type="term" value="P:sodium ion transport"/>
    <property type="evidence" value="ECO:0007669"/>
    <property type="project" value="UniProtKB-KW"/>
</dbReference>
<dbReference type="InterPro" id="IPR002758">
    <property type="entry name" value="Cation_antiport_E"/>
</dbReference>
<dbReference type="NCBIfam" id="NF009291">
    <property type="entry name" value="PRK12651.1-1"/>
    <property type="match status" value="1"/>
</dbReference>
<dbReference type="PANTHER" id="PTHR34584">
    <property type="entry name" value="NA(+)/H(+) ANTIPORTER SUBUNIT E1"/>
    <property type="match status" value="1"/>
</dbReference>
<dbReference type="PANTHER" id="PTHR34584:SF1">
    <property type="entry name" value="NA(+)_H(+) ANTIPORTER SUBUNIT E1"/>
    <property type="match status" value="1"/>
</dbReference>
<dbReference type="Pfam" id="PF01899">
    <property type="entry name" value="MNHE"/>
    <property type="match status" value="1"/>
</dbReference>
<dbReference type="PIRSF" id="PIRSF019239">
    <property type="entry name" value="MrpE"/>
    <property type="match status" value="1"/>
</dbReference>
<reference key="1">
    <citation type="journal article" date="2005" name="Proc. Natl. Acad. Sci. U.S.A.">
        <title>Whole genome sequence of Staphylococcus saprophyticus reveals the pathogenesis of uncomplicated urinary tract infection.</title>
        <authorList>
            <person name="Kuroda M."/>
            <person name="Yamashita A."/>
            <person name="Hirakawa H."/>
            <person name="Kumano M."/>
            <person name="Morikawa K."/>
            <person name="Higashide M."/>
            <person name="Maruyama A."/>
            <person name="Inose Y."/>
            <person name="Matoba K."/>
            <person name="Toh H."/>
            <person name="Kuhara S."/>
            <person name="Hattori M."/>
            <person name="Ohta T."/>
        </authorList>
    </citation>
    <scope>NUCLEOTIDE SEQUENCE [LARGE SCALE GENOMIC DNA]</scope>
    <source>
        <strain>ATCC 15305 / DSM 20229 / NCIMB 8711 / NCTC 7292 / S-41</strain>
    </source>
</reference>
<gene>
    <name type="primary">mnhE1</name>
    <name type="ordered locus">SSP1827</name>
</gene>
<sequence>MAIQILVNLILSVFWLFVTGSYNFNNFILGYLFALLLVYIMRGVLPGRFYLITVYKIIKLFLVFLIELIKANIDVIRIVVKPNIDNEPAFFTYNTDLKKDWQIVLLSNLITLTPGTIVLGISDDRTKIYIHSIDFSTKEEEVESIKSSLEKVVREVGENE</sequence>
<organism>
    <name type="scientific">Staphylococcus saprophyticus subsp. saprophyticus (strain ATCC 15305 / DSM 20229 / NCIMB 8711 / NCTC 7292 / S-41)</name>
    <dbReference type="NCBI Taxonomy" id="342451"/>
    <lineage>
        <taxon>Bacteria</taxon>
        <taxon>Bacillati</taxon>
        <taxon>Bacillota</taxon>
        <taxon>Bacilli</taxon>
        <taxon>Bacillales</taxon>
        <taxon>Staphylococcaceae</taxon>
        <taxon>Staphylococcus</taxon>
    </lineage>
</organism>
<comment type="function">
    <text evidence="1">Mnh complex is a Na(+)/H(+) antiporter involved in Na(+) excretion.</text>
</comment>
<comment type="subunit">
    <text evidence="1">May form a heterooligomeric complex that consists of seven subunits: mnhA1, mnhB1, mnhC1, mnhD1, mnhE1, mnhF1 and mnhG1.</text>
</comment>
<comment type="subcellular location">
    <subcellularLocation>
        <location evidence="3">Cell membrane</location>
        <topology evidence="3">Multi-pass membrane protein</topology>
    </subcellularLocation>
</comment>
<comment type="similarity">
    <text evidence="3">Belongs to the CPA3 antiporters (TC 2.A.63) subunit E family.</text>
</comment>
<accession>Q49W87</accession>
<proteinExistence type="inferred from homology"/>
<evidence type="ECO:0000250" key="1"/>
<evidence type="ECO:0000255" key="2"/>
<evidence type="ECO:0000305" key="3"/>
<protein>
    <recommendedName>
        <fullName>Na(+)/H(+) antiporter subunit E1</fullName>
    </recommendedName>
    <alternativeName>
        <fullName>Mnh complex subunit E1</fullName>
    </alternativeName>
</protein>
<keyword id="KW-0050">Antiport</keyword>
<keyword id="KW-1003">Cell membrane</keyword>
<keyword id="KW-0375">Hydrogen ion transport</keyword>
<keyword id="KW-0406">Ion transport</keyword>
<keyword id="KW-0472">Membrane</keyword>
<keyword id="KW-1185">Reference proteome</keyword>
<keyword id="KW-0915">Sodium</keyword>
<keyword id="KW-0739">Sodium transport</keyword>
<keyword id="KW-0812">Transmembrane</keyword>
<keyword id="KW-1133">Transmembrane helix</keyword>
<keyword id="KW-0813">Transport</keyword>
<name>MNHE1_STAS1</name>
<feature type="chain" id="PRO_0000372152" description="Na(+)/H(+) antiporter subunit E1">
    <location>
        <begin position="1"/>
        <end position="160"/>
    </location>
</feature>
<feature type="transmembrane region" description="Helical" evidence="2">
    <location>
        <begin position="1"/>
        <end position="21"/>
    </location>
</feature>
<feature type="transmembrane region" description="Helical" evidence="2">
    <location>
        <begin position="27"/>
        <end position="47"/>
    </location>
</feature>
<feature type="transmembrane region" description="Helical" evidence="2">
    <location>
        <begin position="49"/>
        <end position="69"/>
    </location>
</feature>
<feature type="transmembrane region" description="Helical" evidence="2">
    <location>
        <begin position="101"/>
        <end position="121"/>
    </location>
</feature>